<protein>
    <recommendedName>
        <fullName>Synaptotagmin-1</fullName>
    </recommendedName>
    <alternativeName>
        <fullName>Synaptotagmin I</fullName>
    </alternativeName>
</protein>
<proteinExistence type="evidence at transcript level"/>
<dbReference type="EMBL" id="L15302">
    <property type="protein sequence ID" value="AAA28145.1"/>
    <property type="molecule type" value="mRNA"/>
</dbReference>
<dbReference type="EMBL" id="FO080321">
    <property type="protein sequence ID" value="CCD62852.1"/>
    <property type="molecule type" value="Genomic_DNA"/>
</dbReference>
<dbReference type="PIR" id="A40707">
    <property type="entry name" value="A40707"/>
</dbReference>
<dbReference type="RefSeq" id="NP_001022129.1">
    <property type="nucleotide sequence ID" value="NM_001026958.6"/>
</dbReference>
<dbReference type="SMR" id="P34693"/>
<dbReference type="BioGRID" id="39458">
    <property type="interactions" value="4"/>
</dbReference>
<dbReference type="FunCoup" id="P34693">
    <property type="interactions" value="564"/>
</dbReference>
<dbReference type="STRING" id="6239.F31E8.2b.1"/>
<dbReference type="TCDB" id="1.F.1.1.3">
    <property type="family name" value="the synaptosomal vesicle fusion pore (svf-pore) family"/>
</dbReference>
<dbReference type="PaxDb" id="6239-F31E8.2b"/>
<dbReference type="PeptideAtlas" id="P34693"/>
<dbReference type="EnsemblMetazoa" id="F31E8.2a.1">
    <property type="protein sequence ID" value="F31E8.2a.1"/>
    <property type="gene ID" value="WBGene00004921"/>
</dbReference>
<dbReference type="GeneID" id="174120"/>
<dbReference type="KEGG" id="cel:CELE_F31E8.2"/>
<dbReference type="UCSC" id="F31E8.2a">
    <property type="organism name" value="c. elegans"/>
</dbReference>
<dbReference type="AGR" id="WB:WBGene00004921"/>
<dbReference type="CTD" id="174120"/>
<dbReference type="WormBase" id="F31E8.2a">
    <property type="protein sequence ID" value="CE02711"/>
    <property type="gene ID" value="WBGene00004921"/>
    <property type="gene designation" value="snt-1"/>
</dbReference>
<dbReference type="eggNOG" id="KOG1028">
    <property type="taxonomic scope" value="Eukaryota"/>
</dbReference>
<dbReference type="HOGENOM" id="CLU_023008_0_1_1"/>
<dbReference type="InParanoid" id="P34693"/>
<dbReference type="OrthoDB" id="67700at2759"/>
<dbReference type="Reactome" id="R-CEL-181429">
    <property type="pathway name" value="Serotonin Neurotransmitter Release Cycle"/>
</dbReference>
<dbReference type="Reactome" id="R-CEL-181430">
    <property type="pathway name" value="Norepinephrine Neurotransmitter Release Cycle"/>
</dbReference>
<dbReference type="Reactome" id="R-CEL-210500">
    <property type="pathway name" value="Glutamate Neurotransmitter Release Cycle"/>
</dbReference>
<dbReference type="Reactome" id="R-CEL-212676">
    <property type="pathway name" value="Dopamine Neurotransmitter Release Cycle"/>
</dbReference>
<dbReference type="Reactome" id="R-CEL-264642">
    <property type="pathway name" value="Acetylcholine Neurotransmitter Release Cycle"/>
</dbReference>
<dbReference type="Reactome" id="R-CEL-8856825">
    <property type="pathway name" value="Cargo recognition for clathrin-mediated endocytosis"/>
</dbReference>
<dbReference type="Reactome" id="R-CEL-8856828">
    <property type="pathway name" value="Clathrin-mediated endocytosis"/>
</dbReference>
<dbReference type="Reactome" id="R-CEL-888590">
    <property type="pathway name" value="GABA synthesis, release, reuptake and degradation"/>
</dbReference>
<dbReference type="PRO" id="PR:P34693"/>
<dbReference type="Proteomes" id="UP000001940">
    <property type="component" value="Chromosome II"/>
</dbReference>
<dbReference type="Bgee" id="WBGene00004921">
    <property type="expression patterns" value="Expressed in larva and 3 other cell types or tissues"/>
</dbReference>
<dbReference type="ExpressionAtlas" id="P34693">
    <property type="expression patterns" value="baseline and differential"/>
</dbReference>
<dbReference type="GO" id="GO:0030424">
    <property type="term" value="C:axon"/>
    <property type="evidence" value="ECO:0000318"/>
    <property type="project" value="GO_Central"/>
</dbReference>
<dbReference type="GO" id="GO:0031045">
    <property type="term" value="C:dense core granule"/>
    <property type="evidence" value="ECO:0000318"/>
    <property type="project" value="GO_Central"/>
</dbReference>
<dbReference type="GO" id="GO:0070382">
    <property type="term" value="C:exocytic vesicle"/>
    <property type="evidence" value="ECO:0000318"/>
    <property type="project" value="GO_Central"/>
</dbReference>
<dbReference type="GO" id="GO:0005886">
    <property type="term" value="C:plasma membrane"/>
    <property type="evidence" value="ECO:0000318"/>
    <property type="project" value="GO_Central"/>
</dbReference>
<dbReference type="GO" id="GO:0045202">
    <property type="term" value="C:synapse"/>
    <property type="evidence" value="ECO:0000314"/>
    <property type="project" value="WormBase"/>
</dbReference>
<dbReference type="GO" id="GO:0008021">
    <property type="term" value="C:synaptic vesicle"/>
    <property type="evidence" value="ECO:0000314"/>
    <property type="project" value="WormBase"/>
</dbReference>
<dbReference type="GO" id="GO:0030672">
    <property type="term" value="C:synaptic vesicle membrane"/>
    <property type="evidence" value="ECO:0000318"/>
    <property type="project" value="GO_Central"/>
</dbReference>
<dbReference type="GO" id="GO:0005509">
    <property type="term" value="F:calcium ion binding"/>
    <property type="evidence" value="ECO:0000314"/>
    <property type="project" value="WormBase"/>
</dbReference>
<dbReference type="GO" id="GO:0061891">
    <property type="term" value="F:calcium ion sensor activity"/>
    <property type="evidence" value="ECO:0000315"/>
    <property type="project" value="WormBase"/>
</dbReference>
<dbReference type="GO" id="GO:0005544">
    <property type="term" value="F:calcium-dependent phospholipid binding"/>
    <property type="evidence" value="ECO:0000314"/>
    <property type="project" value="WormBase"/>
</dbReference>
<dbReference type="GO" id="GO:0000149">
    <property type="term" value="F:SNARE binding"/>
    <property type="evidence" value="ECO:0000318"/>
    <property type="project" value="GO_Central"/>
</dbReference>
<dbReference type="GO" id="GO:0099502">
    <property type="term" value="P:calcium-dependent activation of synaptic vesicle fusion"/>
    <property type="evidence" value="ECO:0000318"/>
    <property type="project" value="GO_Central"/>
</dbReference>
<dbReference type="GO" id="GO:0030421">
    <property type="term" value="P:defecation"/>
    <property type="evidence" value="ECO:0000315"/>
    <property type="project" value="WormBase"/>
</dbReference>
<dbReference type="GO" id="GO:0007626">
    <property type="term" value="P:locomotory behavior"/>
    <property type="evidence" value="ECO:0000315"/>
    <property type="project" value="WormBase"/>
</dbReference>
<dbReference type="GO" id="GO:0070266">
    <property type="term" value="P:necroptotic process"/>
    <property type="evidence" value="ECO:0000316"/>
    <property type="project" value="WormBase"/>
</dbReference>
<dbReference type="GO" id="GO:0017158">
    <property type="term" value="P:regulation of calcium ion-dependent exocytosis"/>
    <property type="evidence" value="ECO:0000318"/>
    <property type="project" value="GO_Central"/>
</dbReference>
<dbReference type="GO" id="GO:0043051">
    <property type="term" value="P:regulation of nematode pharyngeal pumping"/>
    <property type="evidence" value="ECO:0000315"/>
    <property type="project" value="WormBase"/>
</dbReference>
<dbReference type="GO" id="GO:0046928">
    <property type="term" value="P:regulation of neurotransmitter secretion"/>
    <property type="evidence" value="ECO:0000315"/>
    <property type="project" value="WormBase"/>
</dbReference>
<dbReference type="GO" id="GO:2000300">
    <property type="term" value="P:regulation of synaptic vesicle exocytosis"/>
    <property type="evidence" value="ECO:0000318"/>
    <property type="project" value="GO_Central"/>
</dbReference>
<dbReference type="GO" id="GO:0048488">
    <property type="term" value="P:synaptic vesicle endocytosis"/>
    <property type="evidence" value="ECO:0000315"/>
    <property type="project" value="WormBase"/>
</dbReference>
<dbReference type="GO" id="GO:0016079">
    <property type="term" value="P:synaptic vesicle exocytosis"/>
    <property type="evidence" value="ECO:0000304"/>
    <property type="project" value="WormBase"/>
</dbReference>
<dbReference type="GO" id="GO:0016192">
    <property type="term" value="P:vesicle-mediated transport"/>
    <property type="evidence" value="ECO:0000318"/>
    <property type="project" value="GO_Central"/>
</dbReference>
<dbReference type="CDD" id="cd08385">
    <property type="entry name" value="C2A_Synaptotagmin-1-5-6-9-10"/>
    <property type="match status" value="1"/>
</dbReference>
<dbReference type="CDD" id="cd08402">
    <property type="entry name" value="C2B_Synaptotagmin-1"/>
    <property type="match status" value="1"/>
</dbReference>
<dbReference type="FunFam" id="2.60.40.150:FF:000007">
    <property type="entry name" value="Synaptotagmin 1"/>
    <property type="match status" value="1"/>
</dbReference>
<dbReference type="FunFam" id="2.60.40.150:FF:000016">
    <property type="entry name" value="Synaptotagmin 1"/>
    <property type="match status" value="1"/>
</dbReference>
<dbReference type="Gene3D" id="2.60.40.150">
    <property type="entry name" value="C2 domain"/>
    <property type="match status" value="2"/>
</dbReference>
<dbReference type="InterPro" id="IPR000008">
    <property type="entry name" value="C2_dom"/>
</dbReference>
<dbReference type="InterPro" id="IPR035892">
    <property type="entry name" value="C2_domain_sf"/>
</dbReference>
<dbReference type="InterPro" id="IPR001565">
    <property type="entry name" value="Synaptotagmin"/>
</dbReference>
<dbReference type="PANTHER" id="PTHR10024">
    <property type="entry name" value="SYNAPTOTAGMIN"/>
    <property type="match status" value="1"/>
</dbReference>
<dbReference type="PANTHER" id="PTHR10024:SF227">
    <property type="entry name" value="SYNAPTOTAGMIN 1"/>
    <property type="match status" value="1"/>
</dbReference>
<dbReference type="Pfam" id="PF00168">
    <property type="entry name" value="C2"/>
    <property type="match status" value="2"/>
</dbReference>
<dbReference type="PRINTS" id="PR00360">
    <property type="entry name" value="C2DOMAIN"/>
</dbReference>
<dbReference type="PRINTS" id="PR00399">
    <property type="entry name" value="SYNAPTOTAGMN"/>
</dbReference>
<dbReference type="SMART" id="SM00239">
    <property type="entry name" value="C2"/>
    <property type="match status" value="2"/>
</dbReference>
<dbReference type="SUPFAM" id="SSF49562">
    <property type="entry name" value="C2 domain (Calcium/lipid-binding domain, CaLB)"/>
    <property type="match status" value="2"/>
</dbReference>
<dbReference type="PROSITE" id="PS50004">
    <property type="entry name" value="C2"/>
    <property type="match status" value="2"/>
</dbReference>
<comment type="function">
    <text evidence="2 5">May have a regulatory role in the membrane interactions during trafficking of synaptic vesicles at the active zone of the synapse. It binds acidic phospholipids with a specificity that requires the presence of both an acidic head group and a diacyl backbone (By similarity). Involved in necrotic cell death (PubMed:22157748).</text>
</comment>
<comment type="cofactor">
    <cofactor evidence="4">
        <name>Ca(2+)</name>
        <dbReference type="ChEBI" id="CHEBI:29108"/>
    </cofactor>
    <text evidence="1">Binds 3 Ca(2+) ions per subunit. The ions are bound to the C2 domains.</text>
</comment>
<comment type="subcellular location">
    <subcellularLocation>
        <location>Cytoplasmic vesicle</location>
        <location>Secretory vesicle</location>
        <location>Synaptic vesicle membrane</location>
        <topology>Single-pass membrane protein</topology>
    </subcellularLocation>
    <subcellularLocation>
        <location>Synapse</location>
    </subcellularLocation>
    <text>And vesicle-like structures.</text>
</comment>
<comment type="tissue specificity">
    <text>Localized to regions known to be rich in synapses and appears to be associated with synaptic vesicles. Also found in some non-neuronal secretory structures.</text>
</comment>
<comment type="disruption phenotype">
    <text evidence="5 6">Worms exhibit severe behavioral abnormalities that are characteristic of deficiencies in synaptic function, including severe locomotion, feeding, and defecation defects (PubMed:8391930). Increased survival in response to hypoxia induced by sodium azide (PubMed:22157748). Reduces the formation of neuron cell corpses in a hyperactive mec-4 or deg-3 mutant background (PubMed:22157748).</text>
</comment>
<comment type="similarity">
    <text evidence="7">Belongs to the synaptotagmin family.</text>
</comment>
<evidence type="ECO:0000250" key="1"/>
<evidence type="ECO:0000250" key="2">
    <source>
        <dbReference type="UniProtKB" id="P21579"/>
    </source>
</evidence>
<evidence type="ECO:0000255" key="3"/>
<evidence type="ECO:0000255" key="4">
    <source>
        <dbReference type="PROSITE-ProRule" id="PRU00041"/>
    </source>
</evidence>
<evidence type="ECO:0000269" key="5">
    <source>
    </source>
</evidence>
<evidence type="ECO:0000269" key="6">
    <source>
    </source>
</evidence>
<evidence type="ECO:0000305" key="7"/>
<keyword id="KW-0106">Calcium</keyword>
<keyword id="KW-0968">Cytoplasmic vesicle</keyword>
<keyword id="KW-0472">Membrane</keyword>
<keyword id="KW-0479">Metal-binding</keyword>
<keyword id="KW-1210">Necrosis</keyword>
<keyword id="KW-1185">Reference proteome</keyword>
<keyword id="KW-0677">Repeat</keyword>
<keyword id="KW-0770">Synapse</keyword>
<keyword id="KW-0812">Transmembrane</keyword>
<keyword id="KW-1133">Transmembrane helix</keyword>
<organism>
    <name type="scientific">Caenorhabditis elegans</name>
    <dbReference type="NCBI Taxonomy" id="6239"/>
    <lineage>
        <taxon>Eukaryota</taxon>
        <taxon>Metazoa</taxon>
        <taxon>Ecdysozoa</taxon>
        <taxon>Nematoda</taxon>
        <taxon>Chromadorea</taxon>
        <taxon>Rhabditida</taxon>
        <taxon>Rhabditina</taxon>
        <taxon>Rhabditomorpha</taxon>
        <taxon>Rhabditoidea</taxon>
        <taxon>Rhabditidae</taxon>
        <taxon>Peloderinae</taxon>
        <taxon>Caenorhabditis</taxon>
    </lineage>
</organism>
<feature type="chain" id="PRO_0000183988" description="Synaptotagmin-1">
    <location>
        <begin position="1"/>
        <end position="441"/>
    </location>
</feature>
<feature type="topological domain" description="Vesicular" evidence="3">
    <location>
        <begin position="1"/>
        <end position="69"/>
    </location>
</feature>
<feature type="transmembrane region" description="Helical" evidence="3">
    <location>
        <begin position="70"/>
        <end position="96"/>
    </location>
</feature>
<feature type="topological domain" description="Cytoplasmic" evidence="3">
    <location>
        <begin position="97"/>
        <end position="441"/>
    </location>
</feature>
<feature type="domain" description="C2 1" evidence="4">
    <location>
        <begin position="159"/>
        <end position="278"/>
    </location>
</feature>
<feature type="domain" description="C2 2" evidence="4">
    <location>
        <begin position="292"/>
        <end position="425"/>
    </location>
</feature>
<feature type="binding site" evidence="4">
    <location>
        <position position="190"/>
    </location>
    <ligand>
        <name>Ca(2+)</name>
        <dbReference type="ChEBI" id="CHEBI:29108"/>
        <label>1</label>
    </ligand>
</feature>
<feature type="binding site" evidence="4">
    <location>
        <position position="190"/>
    </location>
    <ligand>
        <name>Ca(2+)</name>
        <dbReference type="ChEBI" id="CHEBI:29108"/>
        <label>2</label>
    </ligand>
</feature>
<feature type="binding site" evidence="4">
    <location>
        <position position="196"/>
    </location>
    <ligand>
        <name>Ca(2+)</name>
        <dbReference type="ChEBI" id="CHEBI:29108"/>
        <label>1</label>
    </ligand>
</feature>
<feature type="binding site" evidence="4">
    <location>
        <position position="248"/>
    </location>
    <ligand>
        <name>Ca(2+)</name>
        <dbReference type="ChEBI" id="CHEBI:29108"/>
        <label>1</label>
    </ligand>
</feature>
<feature type="binding site" evidence="4">
    <location>
        <position position="248"/>
    </location>
    <ligand>
        <name>Ca(2+)</name>
        <dbReference type="ChEBI" id="CHEBI:29108"/>
        <label>2</label>
    </ligand>
</feature>
<feature type="binding site" evidence="4">
    <location>
        <position position="249"/>
    </location>
    <ligand>
        <name>Ca(2+)</name>
        <dbReference type="ChEBI" id="CHEBI:29108"/>
        <label>1</label>
    </ligand>
</feature>
<feature type="binding site" evidence="4">
    <location>
        <position position="250"/>
    </location>
    <ligand>
        <name>Ca(2+)</name>
        <dbReference type="ChEBI" id="CHEBI:29108"/>
        <label>1</label>
    </ligand>
</feature>
<feature type="binding site" evidence="4">
    <location>
        <position position="250"/>
    </location>
    <ligand>
        <name>Ca(2+)</name>
        <dbReference type="ChEBI" id="CHEBI:29108"/>
        <label>2</label>
    </ligand>
</feature>
<feature type="binding site" evidence="4">
    <location>
        <position position="250"/>
    </location>
    <ligand>
        <name>Ca(2+)</name>
        <dbReference type="ChEBI" id="CHEBI:29108"/>
        <label>3</label>
    </ligand>
</feature>
<feature type="binding site" evidence="4">
    <location>
        <position position="253"/>
    </location>
    <ligand>
        <name>Ca(2+)</name>
        <dbReference type="ChEBI" id="CHEBI:29108"/>
        <label>3</label>
    </ligand>
</feature>
<feature type="binding site" evidence="4">
    <location>
        <position position="254"/>
    </location>
    <ligand>
        <name>Ca(2+)</name>
        <dbReference type="ChEBI" id="CHEBI:29108"/>
        <label>3</label>
    </ligand>
</feature>
<feature type="binding site" evidence="4">
    <location>
        <position position="256"/>
    </location>
    <ligand>
        <name>Ca(2+)</name>
        <dbReference type="ChEBI" id="CHEBI:29108"/>
        <label>2</label>
    </ligand>
</feature>
<feature type="binding site" evidence="4">
    <location>
        <position position="256"/>
    </location>
    <ligand>
        <name>Ca(2+)</name>
        <dbReference type="ChEBI" id="CHEBI:29108"/>
        <label>3</label>
    </ligand>
</feature>
<feature type="binding site" evidence="4">
    <location>
        <position position="323"/>
    </location>
    <ligand>
        <name>Ca(2+)</name>
        <dbReference type="ChEBI" id="CHEBI:29108"/>
        <label>4</label>
    </ligand>
</feature>
<feature type="binding site" evidence="4">
    <location>
        <position position="323"/>
    </location>
    <ligand>
        <name>Ca(2+)</name>
        <dbReference type="ChEBI" id="CHEBI:29108"/>
        <label>5</label>
    </ligand>
</feature>
<feature type="binding site" evidence="4">
    <location>
        <position position="329"/>
    </location>
    <ligand>
        <name>Ca(2+)</name>
        <dbReference type="ChEBI" id="CHEBI:29108"/>
        <label>4</label>
    </ligand>
</feature>
<feature type="binding site" evidence="4">
    <location>
        <position position="383"/>
    </location>
    <ligand>
        <name>Ca(2+)</name>
        <dbReference type="ChEBI" id="CHEBI:29108"/>
        <label>4</label>
    </ligand>
</feature>
<feature type="binding site" evidence="4">
    <location>
        <position position="383"/>
    </location>
    <ligand>
        <name>Ca(2+)</name>
        <dbReference type="ChEBI" id="CHEBI:29108"/>
        <label>5</label>
    </ligand>
</feature>
<feature type="binding site" evidence="4">
    <location>
        <position position="385"/>
    </location>
    <ligand>
        <name>Ca(2+)</name>
        <dbReference type="ChEBI" id="CHEBI:29108"/>
        <label>4</label>
    </ligand>
</feature>
<feature type="binding site" evidence="4">
    <location>
        <position position="385"/>
    </location>
    <ligand>
        <name>Ca(2+)</name>
        <dbReference type="ChEBI" id="CHEBI:29108"/>
        <label>5</label>
    </ligand>
</feature>
<feature type="binding site" evidence="4">
    <location>
        <position position="391"/>
    </location>
    <ligand>
        <name>Ca(2+)</name>
        <dbReference type="ChEBI" id="CHEBI:29108"/>
        <label>5</label>
    </ligand>
</feature>
<accession>P34693</accession>
<name>SYT1_CAEEL</name>
<reference key="1">
    <citation type="journal article" date="1993" name="Cell">
        <title>Synaptic function is impaired but not eliminated in C. elegans mutants lacking synaptotagmin.</title>
        <authorList>
            <person name="Nonet M.L."/>
            <person name="Grundahl K."/>
            <person name="Meyer B.J."/>
            <person name="Rand J.B."/>
        </authorList>
    </citation>
    <scope>NUCLEOTIDE SEQUENCE [MRNA]</scope>
    <scope>DISRUPTION PHENOTYPE</scope>
    <source>
        <strain>Bristol N2</strain>
    </source>
</reference>
<reference key="2">
    <citation type="journal article" date="1998" name="Science">
        <title>Genome sequence of the nematode C. elegans: a platform for investigating biology.</title>
        <authorList>
            <consortium name="The C. elegans sequencing consortium"/>
        </authorList>
    </citation>
    <scope>NUCLEOTIDE SEQUENCE [LARGE SCALE GENOMIC DNA]</scope>
    <source>
        <strain>Bristol N2</strain>
    </source>
</reference>
<reference key="3">
    <citation type="journal article" date="2012" name="EMBO J.">
        <title>Endocytosis and intracellular trafficking contribute to necrotic neurodegeneration in C. elegans.</title>
        <authorList>
            <person name="Troulinaki K."/>
            <person name="Tavernarakis N."/>
        </authorList>
    </citation>
    <scope>FUNCTION</scope>
    <scope>DISRUPTION PHENOTYPE</scope>
</reference>
<gene>
    <name type="primary">snt-1</name>
    <name type="ORF">F31E8.2</name>
</gene>
<sequence>MVKLDFSSQDEENDEDLTKEFVRDEAPMEETTSEAVKQIATTTKETLKDVVVNKVIDVKDVVKEKVMQQTGMPEWAFVFLGFVFILLVLACAFCLIRKLFGKKRHGEKNKKGGLKGFFGKGQDVVDGKNIQGMAQDLEELGDAMEQNEKEQAEEKEEVKLGRIQYKLDYDFQQGQLTVTVIQAEDLPGMDMSGTSDPYVKLYLLPEKKKKVETKVHRKTLNPVFNETFIFKVAFNEITAKTLVFAIYDFDRFSKHDQIGQVLIPLGKIDLGAVIEEWKDIAPPPDDKEAEKSLGDICFSLRYVPTAGKLTVVILEAKNLKKMDVGGLSDPYVKIVLMQGGKRLKKKKTSIKKCTLNPYYNESFSFEVPFEQIQKVSLMITVMDYDKLGSNDAIGRCLLGCNGTGAELRHWMDMLASPRRPIAQWHTLGPVEEEGDKKDDKK</sequence>